<feature type="chain" id="PRO_1000198759" description="Tryptophan synthase beta chain">
    <location>
        <begin position="1"/>
        <end position="396"/>
    </location>
</feature>
<feature type="modified residue" description="N6-(pyridoxal phosphate)lysine" evidence="1">
    <location>
        <position position="86"/>
    </location>
</feature>
<proteinExistence type="inferred from homology"/>
<protein>
    <recommendedName>
        <fullName evidence="1">Tryptophan synthase beta chain</fullName>
        <ecNumber evidence="1">4.2.1.20</ecNumber>
    </recommendedName>
</protein>
<dbReference type="EC" id="4.2.1.20" evidence="1"/>
<dbReference type="EMBL" id="CP001233">
    <property type="protein sequence ID" value="ACP05442.1"/>
    <property type="molecule type" value="Genomic_DNA"/>
</dbReference>
<dbReference type="RefSeq" id="WP_001096418.1">
    <property type="nucleotide sequence ID" value="NC_012578.1"/>
</dbReference>
<dbReference type="SMR" id="C3LLL6"/>
<dbReference type="KEGG" id="vcm:VCM66_1125"/>
<dbReference type="HOGENOM" id="CLU_016734_3_1_6"/>
<dbReference type="UniPathway" id="UPA00035">
    <property type="reaction ID" value="UER00044"/>
</dbReference>
<dbReference type="Proteomes" id="UP000001217">
    <property type="component" value="Chromosome I"/>
</dbReference>
<dbReference type="GO" id="GO:0005737">
    <property type="term" value="C:cytoplasm"/>
    <property type="evidence" value="ECO:0007669"/>
    <property type="project" value="TreeGrafter"/>
</dbReference>
<dbReference type="GO" id="GO:0004834">
    <property type="term" value="F:tryptophan synthase activity"/>
    <property type="evidence" value="ECO:0007669"/>
    <property type="project" value="UniProtKB-UniRule"/>
</dbReference>
<dbReference type="CDD" id="cd06446">
    <property type="entry name" value="Trp-synth_B"/>
    <property type="match status" value="1"/>
</dbReference>
<dbReference type="FunFam" id="3.40.50.1100:FF:000001">
    <property type="entry name" value="Tryptophan synthase beta chain"/>
    <property type="match status" value="1"/>
</dbReference>
<dbReference type="FunFam" id="3.40.50.1100:FF:000004">
    <property type="entry name" value="Tryptophan synthase beta chain"/>
    <property type="match status" value="1"/>
</dbReference>
<dbReference type="Gene3D" id="3.40.50.1100">
    <property type="match status" value="2"/>
</dbReference>
<dbReference type="HAMAP" id="MF_00133">
    <property type="entry name" value="Trp_synth_beta"/>
    <property type="match status" value="1"/>
</dbReference>
<dbReference type="InterPro" id="IPR006653">
    <property type="entry name" value="Trp_synth_b_CS"/>
</dbReference>
<dbReference type="InterPro" id="IPR006654">
    <property type="entry name" value="Trp_synth_beta"/>
</dbReference>
<dbReference type="InterPro" id="IPR023026">
    <property type="entry name" value="Trp_synth_beta/beta-like"/>
</dbReference>
<dbReference type="InterPro" id="IPR001926">
    <property type="entry name" value="TrpB-like_PALP"/>
</dbReference>
<dbReference type="InterPro" id="IPR036052">
    <property type="entry name" value="TrpB-like_PALP_sf"/>
</dbReference>
<dbReference type="NCBIfam" id="TIGR00263">
    <property type="entry name" value="trpB"/>
    <property type="match status" value="1"/>
</dbReference>
<dbReference type="PANTHER" id="PTHR48077:SF3">
    <property type="entry name" value="TRYPTOPHAN SYNTHASE"/>
    <property type="match status" value="1"/>
</dbReference>
<dbReference type="PANTHER" id="PTHR48077">
    <property type="entry name" value="TRYPTOPHAN SYNTHASE-RELATED"/>
    <property type="match status" value="1"/>
</dbReference>
<dbReference type="Pfam" id="PF00291">
    <property type="entry name" value="PALP"/>
    <property type="match status" value="1"/>
</dbReference>
<dbReference type="PIRSF" id="PIRSF001413">
    <property type="entry name" value="Trp_syn_beta"/>
    <property type="match status" value="1"/>
</dbReference>
<dbReference type="SUPFAM" id="SSF53686">
    <property type="entry name" value="Tryptophan synthase beta subunit-like PLP-dependent enzymes"/>
    <property type="match status" value="1"/>
</dbReference>
<dbReference type="PROSITE" id="PS00168">
    <property type="entry name" value="TRP_SYNTHASE_BETA"/>
    <property type="match status" value="1"/>
</dbReference>
<accession>C3LLL6</accession>
<organism>
    <name type="scientific">Vibrio cholerae serotype O1 (strain M66-2)</name>
    <dbReference type="NCBI Taxonomy" id="579112"/>
    <lineage>
        <taxon>Bacteria</taxon>
        <taxon>Pseudomonadati</taxon>
        <taxon>Pseudomonadota</taxon>
        <taxon>Gammaproteobacteria</taxon>
        <taxon>Vibrionales</taxon>
        <taxon>Vibrionaceae</taxon>
        <taxon>Vibrio</taxon>
    </lineage>
</organism>
<sequence length="396" mass="42864">MAKLNAYFGEFGGQFVPQILVPALDQLEQAFIDAQQDDAFRAEFMSLLQEYAGRPTALTLTQNITKGTKTKLYLKREDLLHGGAHKTNQVLGQALLAKRMGKHEIIAETGAGQHGVATALACALLGLKCRVYMGAKDVERQSPNVFRMRLMGATVIPVHSGSATLKDACNEALRDWSASYETAHYLLGTAAGPHPFPTIVREFQRIIGEETKNQILAREGRLPDAVIACVGGGSNAIGMFADFIEEESVRLIGIEPAGKGIHTHQHGAPLKHGKTGIFFGMKAPLMQDEHGQVEESYSVSAGLDFPSVGPQHAYLNAIGRAEYESITDDEALDAFQALARNEGIIPALESSHALAHAIKMAYAEPDKEQLLVVNLSGRGDKDIFTVHKLLEDKGAL</sequence>
<name>TRPB_VIBCM</name>
<evidence type="ECO:0000255" key="1">
    <source>
        <dbReference type="HAMAP-Rule" id="MF_00133"/>
    </source>
</evidence>
<gene>
    <name evidence="1" type="primary">trpB</name>
    <name type="ordered locus">VCM66_1125</name>
</gene>
<comment type="function">
    <text evidence="1">The beta subunit is responsible for the synthesis of L-tryptophan from indole and L-serine.</text>
</comment>
<comment type="catalytic activity">
    <reaction evidence="1">
        <text>(1S,2R)-1-C-(indol-3-yl)glycerol 3-phosphate + L-serine = D-glyceraldehyde 3-phosphate + L-tryptophan + H2O</text>
        <dbReference type="Rhea" id="RHEA:10532"/>
        <dbReference type="ChEBI" id="CHEBI:15377"/>
        <dbReference type="ChEBI" id="CHEBI:33384"/>
        <dbReference type="ChEBI" id="CHEBI:57912"/>
        <dbReference type="ChEBI" id="CHEBI:58866"/>
        <dbReference type="ChEBI" id="CHEBI:59776"/>
        <dbReference type="EC" id="4.2.1.20"/>
    </reaction>
</comment>
<comment type="cofactor">
    <cofactor evidence="1">
        <name>pyridoxal 5'-phosphate</name>
        <dbReference type="ChEBI" id="CHEBI:597326"/>
    </cofactor>
</comment>
<comment type="pathway">
    <text evidence="1">Amino-acid biosynthesis; L-tryptophan biosynthesis; L-tryptophan from chorismate: step 5/5.</text>
</comment>
<comment type="subunit">
    <text evidence="1">Tetramer of two alpha and two beta chains.</text>
</comment>
<comment type="similarity">
    <text evidence="1">Belongs to the TrpB family.</text>
</comment>
<keyword id="KW-0028">Amino-acid biosynthesis</keyword>
<keyword id="KW-0057">Aromatic amino acid biosynthesis</keyword>
<keyword id="KW-0456">Lyase</keyword>
<keyword id="KW-0663">Pyridoxal phosphate</keyword>
<keyword id="KW-0822">Tryptophan biosynthesis</keyword>
<reference key="1">
    <citation type="journal article" date="2008" name="PLoS ONE">
        <title>A recalibrated molecular clock and independent origins for the cholera pandemic clones.</title>
        <authorList>
            <person name="Feng L."/>
            <person name="Reeves P.R."/>
            <person name="Lan R."/>
            <person name="Ren Y."/>
            <person name="Gao C."/>
            <person name="Zhou Z."/>
            <person name="Ren Y."/>
            <person name="Cheng J."/>
            <person name="Wang W."/>
            <person name="Wang J."/>
            <person name="Qian W."/>
            <person name="Li D."/>
            <person name="Wang L."/>
        </authorList>
    </citation>
    <scope>NUCLEOTIDE SEQUENCE [LARGE SCALE GENOMIC DNA]</scope>
    <source>
        <strain>M66-2</strain>
    </source>
</reference>